<organism>
    <name type="scientific">Homo sapiens</name>
    <name type="common">Human</name>
    <dbReference type="NCBI Taxonomy" id="9606"/>
    <lineage>
        <taxon>Eukaryota</taxon>
        <taxon>Metazoa</taxon>
        <taxon>Chordata</taxon>
        <taxon>Craniata</taxon>
        <taxon>Vertebrata</taxon>
        <taxon>Euteleostomi</taxon>
        <taxon>Mammalia</taxon>
        <taxon>Eutheria</taxon>
        <taxon>Euarchontoglires</taxon>
        <taxon>Primates</taxon>
        <taxon>Haplorrhini</taxon>
        <taxon>Catarrhini</taxon>
        <taxon>Hominidae</taxon>
        <taxon>Homo</taxon>
    </lineage>
</organism>
<evidence type="ECO:0000255" key="1"/>
<evidence type="ECO:0000255" key="2">
    <source>
        <dbReference type="PROSITE-ProRule" id="PRU00113"/>
    </source>
</evidence>
<evidence type="ECO:0000255" key="3">
    <source>
        <dbReference type="PROSITE-ProRule" id="PRU00302"/>
    </source>
</evidence>
<evidence type="ECO:0000269" key="4">
    <source>
    </source>
</evidence>
<evidence type="ECO:0000269" key="5">
    <source>
    </source>
</evidence>
<evidence type="ECO:0000269" key="6">
    <source>
    </source>
</evidence>
<evidence type="ECO:0000269" key="7">
    <source>
    </source>
</evidence>
<evidence type="ECO:0000269" key="8">
    <source>
    </source>
</evidence>
<evidence type="ECO:0000303" key="9">
    <source>
    </source>
</evidence>
<evidence type="ECO:0000305" key="10"/>
<accession>P78539</accession>
<accession>A8K065</accession>
<accession>B3KWP8</accession>
<accession>B4DDB8</accession>
<accession>B4DQH5</accession>
<accession>F5H4D7</accession>
<accession>G3V1L0</accession>
<accession>Q4VX66</accession>
<accession>Q99652</accession>
<accession>Q99913</accession>
<keyword id="KW-0025">Alternative splicing</keyword>
<keyword id="KW-0130">Cell adhesion</keyword>
<keyword id="KW-1015">Disulfide bond</keyword>
<keyword id="KW-0325">Glycoprotein</keyword>
<keyword id="KW-0654">Proteoglycan</keyword>
<keyword id="KW-1267">Proteomics identification</keyword>
<keyword id="KW-1185">Reference proteome</keyword>
<keyword id="KW-0677">Repeat</keyword>
<keyword id="KW-0732">Signal</keyword>
<keyword id="KW-0768">Sushi</keyword>
<reference key="1">
    <citation type="journal article" date="1995" name="Hum. Mol. Genet.">
        <title>A gene (SRPX) encoding a sushi-repeat-containing protein is deleted in patients with X-linked retinitis pigmentosa.</title>
        <authorList>
            <person name="Meindl A."/>
            <person name="Carvalho M.R.S."/>
            <person name="Herrmann K."/>
            <person name="Lorenz B."/>
            <person name="Achatz H."/>
            <person name="Lorenz B."/>
            <person name="Apfelstedt-Sylla E."/>
            <person name="Wittwer B."/>
            <person name="Ross M."/>
            <person name="Meitinger T."/>
        </authorList>
    </citation>
    <scope>NUCLEOTIDE SEQUENCE [MRNA] (ISOFORM 1)</scope>
</reference>
<reference key="2">
    <citation type="journal article" date="1995" name="Hum. Mol. Genet.">
        <title>Identification of a novel gene, ETX1 from Xp21.1, a candidate gene for X-linked retinitis pigmentosa (RP3).</title>
        <authorList>
            <person name="Dry K.L."/>
            <person name="Aldred M.A."/>
            <person name="Edgar A.J."/>
            <person name="Brown J."/>
            <person name="Manson F.D."/>
            <person name="Ho M.-F."/>
            <person name="Prosser J."/>
            <person name="Hardwick L.J."/>
            <person name="Lennon A.A."/>
            <person name="Thomson K."/>
            <person name="van Keuren M."/>
            <person name="Kurnit D.M."/>
            <person name="Bird A.C."/>
            <person name="Jay M."/>
            <person name="Monaco A.P."/>
            <person name="Wright A.F."/>
        </authorList>
    </citation>
    <scope>NUCLEOTIDE SEQUENCE [GENOMIC DNA]</scope>
    <scope>ALTERNATIVE SPLICING</scope>
    <scope>VARIANTS LEU-23 DEL; SER-225 AND PHE-413</scope>
</reference>
<reference key="3">
    <citation type="journal article" date="1997" name="Immunogenetics">
        <title>Cloning of a new human gene with short consensus repeats using the EST database.</title>
        <authorList>
            <person name="Nangaku M."/>
            <person name="Shankland S.J."/>
            <person name="Kurokawa K."/>
            <person name="Bomsztyk K."/>
            <person name="Johnson R.J."/>
            <person name="Couser W.G."/>
        </authorList>
    </citation>
    <scope>NUCLEOTIDE SEQUENCE [MRNA] (ISOFORM 1)</scope>
    <scope>VARIANT LEU-23 DEL</scope>
</reference>
<reference key="4">
    <citation type="journal article" date="2004" name="Nat. Genet.">
        <title>Complete sequencing and characterization of 21,243 full-length human cDNAs.</title>
        <authorList>
            <person name="Ota T."/>
            <person name="Suzuki Y."/>
            <person name="Nishikawa T."/>
            <person name="Otsuki T."/>
            <person name="Sugiyama T."/>
            <person name="Irie R."/>
            <person name="Wakamatsu A."/>
            <person name="Hayashi K."/>
            <person name="Sato H."/>
            <person name="Nagai K."/>
            <person name="Kimura K."/>
            <person name="Makita H."/>
            <person name="Sekine M."/>
            <person name="Obayashi M."/>
            <person name="Nishi T."/>
            <person name="Shibahara T."/>
            <person name="Tanaka T."/>
            <person name="Ishii S."/>
            <person name="Yamamoto J."/>
            <person name="Saito K."/>
            <person name="Kawai Y."/>
            <person name="Isono Y."/>
            <person name="Nakamura Y."/>
            <person name="Nagahari K."/>
            <person name="Murakami K."/>
            <person name="Yasuda T."/>
            <person name="Iwayanagi T."/>
            <person name="Wagatsuma M."/>
            <person name="Shiratori A."/>
            <person name="Sudo H."/>
            <person name="Hosoiri T."/>
            <person name="Kaku Y."/>
            <person name="Kodaira H."/>
            <person name="Kondo H."/>
            <person name="Sugawara M."/>
            <person name="Takahashi M."/>
            <person name="Kanda K."/>
            <person name="Yokoi T."/>
            <person name="Furuya T."/>
            <person name="Kikkawa E."/>
            <person name="Omura Y."/>
            <person name="Abe K."/>
            <person name="Kamihara K."/>
            <person name="Katsuta N."/>
            <person name="Sato K."/>
            <person name="Tanikawa M."/>
            <person name="Yamazaki M."/>
            <person name="Ninomiya K."/>
            <person name="Ishibashi T."/>
            <person name="Yamashita H."/>
            <person name="Murakawa K."/>
            <person name="Fujimori K."/>
            <person name="Tanai H."/>
            <person name="Kimata M."/>
            <person name="Watanabe M."/>
            <person name="Hiraoka S."/>
            <person name="Chiba Y."/>
            <person name="Ishida S."/>
            <person name="Ono Y."/>
            <person name="Takiguchi S."/>
            <person name="Watanabe S."/>
            <person name="Yosida M."/>
            <person name="Hotuta T."/>
            <person name="Kusano J."/>
            <person name="Kanehori K."/>
            <person name="Takahashi-Fujii A."/>
            <person name="Hara H."/>
            <person name="Tanase T.-O."/>
            <person name="Nomura Y."/>
            <person name="Togiya S."/>
            <person name="Komai F."/>
            <person name="Hara R."/>
            <person name="Takeuchi K."/>
            <person name="Arita M."/>
            <person name="Imose N."/>
            <person name="Musashino K."/>
            <person name="Yuuki H."/>
            <person name="Oshima A."/>
            <person name="Sasaki N."/>
            <person name="Aotsuka S."/>
            <person name="Yoshikawa Y."/>
            <person name="Matsunawa H."/>
            <person name="Ichihara T."/>
            <person name="Shiohata N."/>
            <person name="Sano S."/>
            <person name="Moriya S."/>
            <person name="Momiyama H."/>
            <person name="Satoh N."/>
            <person name="Takami S."/>
            <person name="Terashima Y."/>
            <person name="Suzuki O."/>
            <person name="Nakagawa S."/>
            <person name="Senoh A."/>
            <person name="Mizoguchi H."/>
            <person name="Goto Y."/>
            <person name="Shimizu F."/>
            <person name="Wakebe H."/>
            <person name="Hishigaki H."/>
            <person name="Watanabe T."/>
            <person name="Sugiyama A."/>
            <person name="Takemoto M."/>
            <person name="Kawakami B."/>
            <person name="Yamazaki M."/>
            <person name="Watanabe K."/>
            <person name="Kumagai A."/>
            <person name="Itakura S."/>
            <person name="Fukuzumi Y."/>
            <person name="Fujimori Y."/>
            <person name="Komiyama M."/>
            <person name="Tashiro H."/>
            <person name="Tanigami A."/>
            <person name="Fujiwara T."/>
            <person name="Ono T."/>
            <person name="Yamada K."/>
            <person name="Fujii Y."/>
            <person name="Ozaki K."/>
            <person name="Hirao M."/>
            <person name="Ohmori Y."/>
            <person name="Kawabata A."/>
            <person name="Hikiji T."/>
            <person name="Kobatake N."/>
            <person name="Inagaki H."/>
            <person name="Ikema Y."/>
            <person name="Okamoto S."/>
            <person name="Okitani R."/>
            <person name="Kawakami T."/>
            <person name="Noguchi S."/>
            <person name="Itoh T."/>
            <person name="Shigeta K."/>
            <person name="Senba T."/>
            <person name="Matsumura K."/>
            <person name="Nakajima Y."/>
            <person name="Mizuno T."/>
            <person name="Morinaga M."/>
            <person name="Sasaki M."/>
            <person name="Togashi T."/>
            <person name="Oyama M."/>
            <person name="Hata H."/>
            <person name="Watanabe M."/>
            <person name="Komatsu T."/>
            <person name="Mizushima-Sugano J."/>
            <person name="Satoh T."/>
            <person name="Shirai Y."/>
            <person name="Takahashi Y."/>
            <person name="Nakagawa K."/>
            <person name="Okumura K."/>
            <person name="Nagase T."/>
            <person name="Nomura N."/>
            <person name="Kikuchi H."/>
            <person name="Masuho Y."/>
            <person name="Yamashita R."/>
            <person name="Nakai K."/>
            <person name="Yada T."/>
            <person name="Nakamura Y."/>
            <person name="Ohara O."/>
            <person name="Isogai T."/>
            <person name="Sugano S."/>
        </authorList>
    </citation>
    <scope>NUCLEOTIDE SEQUENCE [LARGE SCALE MRNA] (ISOFORMS 1; 3; 4 AND 5)</scope>
    <scope>VARIANT LEU-23 DEL</scope>
    <source>
        <tissue>Prostate</tissue>
    </source>
</reference>
<reference key="5">
    <citation type="journal article" date="2005" name="Nature">
        <title>The DNA sequence of the human X chromosome.</title>
        <authorList>
            <person name="Ross M.T."/>
            <person name="Grafham D.V."/>
            <person name="Coffey A.J."/>
            <person name="Scherer S."/>
            <person name="McLay K."/>
            <person name="Muzny D."/>
            <person name="Platzer M."/>
            <person name="Howell G.R."/>
            <person name="Burrows C."/>
            <person name="Bird C.P."/>
            <person name="Frankish A."/>
            <person name="Lovell F.L."/>
            <person name="Howe K.L."/>
            <person name="Ashurst J.L."/>
            <person name="Fulton R.S."/>
            <person name="Sudbrak R."/>
            <person name="Wen G."/>
            <person name="Jones M.C."/>
            <person name="Hurles M.E."/>
            <person name="Andrews T.D."/>
            <person name="Scott C.E."/>
            <person name="Searle S."/>
            <person name="Ramser J."/>
            <person name="Whittaker A."/>
            <person name="Deadman R."/>
            <person name="Carter N.P."/>
            <person name="Hunt S.E."/>
            <person name="Chen R."/>
            <person name="Cree A."/>
            <person name="Gunaratne P."/>
            <person name="Havlak P."/>
            <person name="Hodgson A."/>
            <person name="Metzker M.L."/>
            <person name="Richards S."/>
            <person name="Scott G."/>
            <person name="Steffen D."/>
            <person name="Sodergren E."/>
            <person name="Wheeler D.A."/>
            <person name="Worley K.C."/>
            <person name="Ainscough R."/>
            <person name="Ambrose K.D."/>
            <person name="Ansari-Lari M.A."/>
            <person name="Aradhya S."/>
            <person name="Ashwell R.I."/>
            <person name="Babbage A.K."/>
            <person name="Bagguley C.L."/>
            <person name="Ballabio A."/>
            <person name="Banerjee R."/>
            <person name="Barker G.E."/>
            <person name="Barlow K.F."/>
            <person name="Barrett I.P."/>
            <person name="Bates K.N."/>
            <person name="Beare D.M."/>
            <person name="Beasley H."/>
            <person name="Beasley O."/>
            <person name="Beck A."/>
            <person name="Bethel G."/>
            <person name="Blechschmidt K."/>
            <person name="Brady N."/>
            <person name="Bray-Allen S."/>
            <person name="Bridgeman A.M."/>
            <person name="Brown A.J."/>
            <person name="Brown M.J."/>
            <person name="Bonnin D."/>
            <person name="Bruford E.A."/>
            <person name="Buhay C."/>
            <person name="Burch P."/>
            <person name="Burford D."/>
            <person name="Burgess J."/>
            <person name="Burrill W."/>
            <person name="Burton J."/>
            <person name="Bye J.M."/>
            <person name="Carder C."/>
            <person name="Carrel L."/>
            <person name="Chako J."/>
            <person name="Chapman J.C."/>
            <person name="Chavez D."/>
            <person name="Chen E."/>
            <person name="Chen G."/>
            <person name="Chen Y."/>
            <person name="Chen Z."/>
            <person name="Chinault C."/>
            <person name="Ciccodicola A."/>
            <person name="Clark S.Y."/>
            <person name="Clarke G."/>
            <person name="Clee C.M."/>
            <person name="Clegg S."/>
            <person name="Clerc-Blankenburg K."/>
            <person name="Clifford K."/>
            <person name="Cobley V."/>
            <person name="Cole C.G."/>
            <person name="Conquer J.S."/>
            <person name="Corby N."/>
            <person name="Connor R.E."/>
            <person name="David R."/>
            <person name="Davies J."/>
            <person name="Davis C."/>
            <person name="Davis J."/>
            <person name="Delgado O."/>
            <person name="Deshazo D."/>
            <person name="Dhami P."/>
            <person name="Ding Y."/>
            <person name="Dinh H."/>
            <person name="Dodsworth S."/>
            <person name="Draper H."/>
            <person name="Dugan-Rocha S."/>
            <person name="Dunham A."/>
            <person name="Dunn M."/>
            <person name="Durbin K.J."/>
            <person name="Dutta I."/>
            <person name="Eades T."/>
            <person name="Ellwood M."/>
            <person name="Emery-Cohen A."/>
            <person name="Errington H."/>
            <person name="Evans K.L."/>
            <person name="Faulkner L."/>
            <person name="Francis F."/>
            <person name="Frankland J."/>
            <person name="Fraser A.E."/>
            <person name="Galgoczy P."/>
            <person name="Gilbert J."/>
            <person name="Gill R."/>
            <person name="Gloeckner G."/>
            <person name="Gregory S.G."/>
            <person name="Gribble S."/>
            <person name="Griffiths C."/>
            <person name="Grocock R."/>
            <person name="Gu Y."/>
            <person name="Gwilliam R."/>
            <person name="Hamilton C."/>
            <person name="Hart E.A."/>
            <person name="Hawes A."/>
            <person name="Heath P.D."/>
            <person name="Heitmann K."/>
            <person name="Hennig S."/>
            <person name="Hernandez J."/>
            <person name="Hinzmann B."/>
            <person name="Ho S."/>
            <person name="Hoffs M."/>
            <person name="Howden P.J."/>
            <person name="Huckle E.J."/>
            <person name="Hume J."/>
            <person name="Hunt P.J."/>
            <person name="Hunt A.R."/>
            <person name="Isherwood J."/>
            <person name="Jacob L."/>
            <person name="Johnson D."/>
            <person name="Jones S."/>
            <person name="de Jong P.J."/>
            <person name="Joseph S.S."/>
            <person name="Keenan S."/>
            <person name="Kelly S."/>
            <person name="Kershaw J.K."/>
            <person name="Khan Z."/>
            <person name="Kioschis P."/>
            <person name="Klages S."/>
            <person name="Knights A.J."/>
            <person name="Kosiura A."/>
            <person name="Kovar-Smith C."/>
            <person name="Laird G.K."/>
            <person name="Langford C."/>
            <person name="Lawlor S."/>
            <person name="Leversha M."/>
            <person name="Lewis L."/>
            <person name="Liu W."/>
            <person name="Lloyd C."/>
            <person name="Lloyd D.M."/>
            <person name="Loulseged H."/>
            <person name="Loveland J.E."/>
            <person name="Lovell J.D."/>
            <person name="Lozado R."/>
            <person name="Lu J."/>
            <person name="Lyne R."/>
            <person name="Ma J."/>
            <person name="Maheshwari M."/>
            <person name="Matthews L.H."/>
            <person name="McDowall J."/>
            <person name="McLaren S."/>
            <person name="McMurray A."/>
            <person name="Meidl P."/>
            <person name="Meitinger T."/>
            <person name="Milne S."/>
            <person name="Miner G."/>
            <person name="Mistry S.L."/>
            <person name="Morgan M."/>
            <person name="Morris S."/>
            <person name="Mueller I."/>
            <person name="Mullikin J.C."/>
            <person name="Nguyen N."/>
            <person name="Nordsiek G."/>
            <person name="Nyakatura G."/>
            <person name="O'dell C.N."/>
            <person name="Okwuonu G."/>
            <person name="Palmer S."/>
            <person name="Pandian R."/>
            <person name="Parker D."/>
            <person name="Parrish J."/>
            <person name="Pasternak S."/>
            <person name="Patel D."/>
            <person name="Pearce A.V."/>
            <person name="Pearson D.M."/>
            <person name="Pelan S.E."/>
            <person name="Perez L."/>
            <person name="Porter K.M."/>
            <person name="Ramsey Y."/>
            <person name="Reichwald K."/>
            <person name="Rhodes S."/>
            <person name="Ridler K.A."/>
            <person name="Schlessinger D."/>
            <person name="Schueler M.G."/>
            <person name="Sehra H.K."/>
            <person name="Shaw-Smith C."/>
            <person name="Shen H."/>
            <person name="Sheridan E.M."/>
            <person name="Shownkeen R."/>
            <person name="Skuce C.D."/>
            <person name="Smith M.L."/>
            <person name="Sotheran E.C."/>
            <person name="Steingruber H.E."/>
            <person name="Steward C.A."/>
            <person name="Storey R."/>
            <person name="Swann R.M."/>
            <person name="Swarbreck D."/>
            <person name="Tabor P.E."/>
            <person name="Taudien S."/>
            <person name="Taylor T."/>
            <person name="Teague B."/>
            <person name="Thomas K."/>
            <person name="Thorpe A."/>
            <person name="Timms K."/>
            <person name="Tracey A."/>
            <person name="Trevanion S."/>
            <person name="Tromans A.C."/>
            <person name="d'Urso M."/>
            <person name="Verduzco D."/>
            <person name="Villasana D."/>
            <person name="Waldron L."/>
            <person name="Wall M."/>
            <person name="Wang Q."/>
            <person name="Warren J."/>
            <person name="Warry G.L."/>
            <person name="Wei X."/>
            <person name="West A."/>
            <person name="Whitehead S.L."/>
            <person name="Whiteley M.N."/>
            <person name="Wilkinson J.E."/>
            <person name="Willey D.L."/>
            <person name="Williams G."/>
            <person name="Williams L."/>
            <person name="Williamson A."/>
            <person name="Williamson H."/>
            <person name="Wilming L."/>
            <person name="Woodmansey R.L."/>
            <person name="Wray P.W."/>
            <person name="Yen J."/>
            <person name="Zhang J."/>
            <person name="Zhou J."/>
            <person name="Zoghbi H."/>
            <person name="Zorilla S."/>
            <person name="Buck D."/>
            <person name="Reinhardt R."/>
            <person name="Poustka A."/>
            <person name="Rosenthal A."/>
            <person name="Lehrach H."/>
            <person name="Meindl A."/>
            <person name="Minx P.J."/>
            <person name="Hillier L.W."/>
            <person name="Willard H.F."/>
            <person name="Wilson R.K."/>
            <person name="Waterston R.H."/>
            <person name="Rice C.M."/>
            <person name="Vaudin M."/>
            <person name="Coulson A."/>
            <person name="Nelson D.L."/>
            <person name="Weinstock G."/>
            <person name="Sulston J.E."/>
            <person name="Durbin R.M."/>
            <person name="Hubbard T."/>
            <person name="Gibbs R.A."/>
            <person name="Beck S."/>
            <person name="Rogers J."/>
            <person name="Bentley D.R."/>
        </authorList>
    </citation>
    <scope>NUCLEOTIDE SEQUENCE [LARGE SCALE GENOMIC DNA]</scope>
</reference>
<reference key="6">
    <citation type="submission" date="2005-07" db="EMBL/GenBank/DDBJ databases">
        <authorList>
            <person name="Mural R.J."/>
            <person name="Istrail S."/>
            <person name="Sutton G.G."/>
            <person name="Florea L."/>
            <person name="Halpern A.L."/>
            <person name="Mobarry C.M."/>
            <person name="Lippert R."/>
            <person name="Walenz B."/>
            <person name="Shatkay H."/>
            <person name="Dew I."/>
            <person name="Miller J.R."/>
            <person name="Flanigan M.J."/>
            <person name="Edwards N.J."/>
            <person name="Bolanos R."/>
            <person name="Fasulo D."/>
            <person name="Halldorsson B.V."/>
            <person name="Hannenhalli S."/>
            <person name="Turner R."/>
            <person name="Yooseph S."/>
            <person name="Lu F."/>
            <person name="Nusskern D.R."/>
            <person name="Shue B.C."/>
            <person name="Zheng X.H."/>
            <person name="Zhong F."/>
            <person name="Delcher A.L."/>
            <person name="Huson D.H."/>
            <person name="Kravitz S.A."/>
            <person name="Mouchard L."/>
            <person name="Reinert K."/>
            <person name="Remington K.A."/>
            <person name="Clark A.G."/>
            <person name="Waterman M.S."/>
            <person name="Eichler E.E."/>
            <person name="Adams M.D."/>
            <person name="Hunkapiller M.W."/>
            <person name="Myers E.W."/>
            <person name="Venter J.C."/>
        </authorList>
    </citation>
    <scope>NUCLEOTIDE SEQUENCE [LARGE SCALE GENOMIC DNA]</scope>
</reference>
<reference key="7">
    <citation type="journal article" date="2004" name="Genome Res.">
        <title>The status, quality, and expansion of the NIH full-length cDNA project: the Mammalian Gene Collection (MGC).</title>
        <authorList>
            <consortium name="The MGC Project Team"/>
        </authorList>
    </citation>
    <scope>NUCLEOTIDE SEQUENCE [LARGE SCALE MRNA] (ISOFORM 1)</scope>
    <source>
        <tissue>Placenta</tissue>
    </source>
</reference>
<reference key="8">
    <citation type="journal article" date="2014" name="J. Proteomics">
        <title>An enzyme assisted RP-RPLC approach for in-depth analysis of human liver phosphoproteome.</title>
        <authorList>
            <person name="Bian Y."/>
            <person name="Song C."/>
            <person name="Cheng K."/>
            <person name="Dong M."/>
            <person name="Wang F."/>
            <person name="Huang J."/>
            <person name="Sun D."/>
            <person name="Wang L."/>
            <person name="Ye M."/>
            <person name="Zou H."/>
        </authorList>
    </citation>
    <scope>IDENTIFICATION BY MASS SPECTROMETRY [LARGE SCALE ANALYSIS]</scope>
    <source>
        <tissue>Liver</tissue>
    </source>
</reference>
<reference key="9">
    <citation type="journal article" date="2020" name="Glycobiology">
        <title>An affinity chromatography and glycoproteomics workflow to profile the chondroitin sulfate proteoglycans that interact with malarial VAR2CSA in the placenta and in cancer.</title>
        <authorList>
            <person name="Toledo A.G."/>
            <person name="Pihl J."/>
            <person name="Spliid C.B."/>
            <person name="Persson A."/>
            <person name="Nilsson J."/>
            <person name="Pereira M.A."/>
            <person name="Gustavsson T."/>
            <person name="Choudhary S."/>
            <person name="Oo H.Z."/>
            <person name="Black P.C."/>
            <person name="Daugaard M."/>
            <person name="Esko J.D."/>
            <person name="Larson G."/>
            <person name="Salanti A."/>
            <person name="Clausen T.M."/>
        </authorList>
    </citation>
    <scope>GLYCOSYLATION AT SER-34</scope>
</reference>
<reference key="10">
    <citation type="journal article" date="2022" name="J. Proteins Proteom.">
        <title>Mass spectrometric analysis of chondroitin sulfate-linked peptides.</title>
        <authorList>
            <person name="Ramarajan M.G."/>
            <person name="Saraswat M."/>
            <person name="Budhraja R."/>
            <person name="Garapati K."/>
            <person name="Raymond K."/>
            <person name="Pandey A."/>
        </authorList>
    </citation>
    <scope>TISSUE SPECIFICITY</scope>
    <scope>GLYCOSYLATION AT SER-34</scope>
</reference>
<dbReference type="EMBL" id="U78093">
    <property type="protein sequence ID" value="AAB36685.1"/>
    <property type="molecule type" value="mRNA"/>
</dbReference>
<dbReference type="EMBL" id="S82496">
    <property type="protein sequence ID" value="AAB37378.1"/>
    <property type="molecule type" value="Genomic_DNA"/>
</dbReference>
<dbReference type="EMBL" id="S82496">
    <property type="protein sequence ID" value="AAB37379.1"/>
    <property type="molecule type" value="Genomic_DNA"/>
</dbReference>
<dbReference type="EMBL" id="AK125542">
    <property type="protein sequence ID" value="BAG54210.1"/>
    <property type="molecule type" value="mRNA"/>
</dbReference>
<dbReference type="EMBL" id="U61374">
    <property type="protein sequence ID" value="AAB40715.1"/>
    <property type="molecule type" value="mRNA"/>
</dbReference>
<dbReference type="EMBL" id="AK289430">
    <property type="protein sequence ID" value="BAF82119.1"/>
    <property type="molecule type" value="mRNA"/>
</dbReference>
<dbReference type="EMBL" id="AK293127">
    <property type="protein sequence ID" value="BAG56679.1"/>
    <property type="molecule type" value="mRNA"/>
</dbReference>
<dbReference type="EMBL" id="AK298802">
    <property type="protein sequence ID" value="BAG60937.1"/>
    <property type="molecule type" value="mRNA"/>
</dbReference>
<dbReference type="EMBL" id="AL121578">
    <property type="status" value="NOT_ANNOTATED_CDS"/>
    <property type="molecule type" value="Genomic_DNA"/>
</dbReference>
<dbReference type="EMBL" id="AL133494">
    <property type="status" value="NOT_ANNOTATED_CDS"/>
    <property type="molecule type" value="Genomic_DNA"/>
</dbReference>
<dbReference type="EMBL" id="AL606748">
    <property type="status" value="NOT_ANNOTATED_CDS"/>
    <property type="molecule type" value="Genomic_DNA"/>
</dbReference>
<dbReference type="EMBL" id="AL627246">
    <property type="status" value="NOT_ANNOTATED_CDS"/>
    <property type="molecule type" value="Genomic_DNA"/>
</dbReference>
<dbReference type="EMBL" id="CH471141">
    <property type="protein sequence ID" value="EAW59447.1"/>
    <property type="molecule type" value="Genomic_DNA"/>
</dbReference>
<dbReference type="EMBL" id="BC020684">
    <property type="protein sequence ID" value="AAH20684.1"/>
    <property type="molecule type" value="mRNA"/>
</dbReference>
<dbReference type="CCDS" id="CCDS14245.1">
    <molecule id="P78539-1"/>
</dbReference>
<dbReference type="CCDS" id="CCDS55400.1">
    <molecule id="P78539-5"/>
</dbReference>
<dbReference type="CCDS" id="CCDS55401.1">
    <molecule id="P78539-3"/>
</dbReference>
<dbReference type="CCDS" id="CCDS55402.1">
    <molecule id="P78539-4"/>
</dbReference>
<dbReference type="RefSeq" id="NP_001164221.1">
    <molecule id="P78539-5"/>
    <property type="nucleotide sequence ID" value="NM_001170750.2"/>
</dbReference>
<dbReference type="RefSeq" id="NP_001164222.1">
    <molecule id="P78539-3"/>
    <property type="nucleotide sequence ID" value="NM_001170751.2"/>
</dbReference>
<dbReference type="RefSeq" id="NP_001164223.1">
    <molecule id="P78539-4"/>
    <property type="nucleotide sequence ID" value="NM_001170752.2"/>
</dbReference>
<dbReference type="RefSeq" id="NP_006298.1">
    <molecule id="P78539-1"/>
    <property type="nucleotide sequence ID" value="NM_006307.5"/>
</dbReference>
<dbReference type="BioGRID" id="113994">
    <property type="interactions" value="7"/>
</dbReference>
<dbReference type="FunCoup" id="P78539">
    <property type="interactions" value="97"/>
</dbReference>
<dbReference type="IntAct" id="P78539">
    <property type="interactions" value="8"/>
</dbReference>
<dbReference type="MINT" id="P78539"/>
<dbReference type="STRING" id="9606.ENSP00000367794"/>
<dbReference type="GlyGen" id="P78539">
    <property type="glycosylation" value="4 sites, 1 O-linked glycan (3 sites)"/>
</dbReference>
<dbReference type="iPTMnet" id="P78539"/>
<dbReference type="PhosphoSitePlus" id="P78539"/>
<dbReference type="BioMuta" id="SRPX"/>
<dbReference type="DMDM" id="2498958"/>
<dbReference type="jPOST" id="P78539"/>
<dbReference type="MassIVE" id="P78539"/>
<dbReference type="PaxDb" id="9606-ENSP00000367794"/>
<dbReference type="PeptideAtlas" id="P78539"/>
<dbReference type="ProteomicsDB" id="26540"/>
<dbReference type="ProteomicsDB" id="32366"/>
<dbReference type="ProteomicsDB" id="57641">
    <molecule id="P78539-1"/>
</dbReference>
<dbReference type="ProteomicsDB" id="57642">
    <molecule id="P78539-2"/>
</dbReference>
<dbReference type="ProteomicsDB" id="57643">
    <molecule id="P78539-3"/>
</dbReference>
<dbReference type="Antibodypedia" id="640">
    <property type="antibodies" value="227 antibodies from 28 providers"/>
</dbReference>
<dbReference type="DNASU" id="8406"/>
<dbReference type="Ensembl" id="ENST00000378533.4">
    <molecule id="P78539-1"/>
    <property type="protein sequence ID" value="ENSP00000367794.3"/>
    <property type="gene ID" value="ENSG00000101955.15"/>
</dbReference>
<dbReference type="Ensembl" id="ENST00000432886.6">
    <molecule id="P78539-3"/>
    <property type="protein sequence ID" value="ENSP00000411165.2"/>
    <property type="gene ID" value="ENSG00000101955.15"/>
</dbReference>
<dbReference type="Ensembl" id="ENST00000538295.5">
    <molecule id="P78539-4"/>
    <property type="protein sequence ID" value="ENSP00000445034.1"/>
    <property type="gene ID" value="ENSG00000101955.15"/>
</dbReference>
<dbReference type="Ensembl" id="ENST00000544439.5">
    <molecule id="P78539-5"/>
    <property type="protein sequence ID" value="ENSP00000440758.1"/>
    <property type="gene ID" value="ENSG00000101955.15"/>
</dbReference>
<dbReference type="GeneID" id="8406"/>
<dbReference type="KEGG" id="hsa:8406"/>
<dbReference type="MANE-Select" id="ENST00000378533.4">
    <property type="protein sequence ID" value="ENSP00000367794.3"/>
    <property type="RefSeq nucleotide sequence ID" value="NM_006307.5"/>
    <property type="RefSeq protein sequence ID" value="NP_006298.1"/>
</dbReference>
<dbReference type="UCSC" id="uc004ddy.3">
    <molecule id="P78539-1"/>
    <property type="organism name" value="human"/>
</dbReference>
<dbReference type="AGR" id="HGNC:11309"/>
<dbReference type="CTD" id="8406"/>
<dbReference type="DisGeNET" id="8406"/>
<dbReference type="GeneCards" id="SRPX"/>
<dbReference type="HGNC" id="HGNC:11309">
    <property type="gene designation" value="SRPX"/>
</dbReference>
<dbReference type="HPA" id="ENSG00000101955">
    <property type="expression patterns" value="Tissue enhanced (adipose)"/>
</dbReference>
<dbReference type="MIM" id="300187">
    <property type="type" value="gene"/>
</dbReference>
<dbReference type="neXtProt" id="NX_P78539"/>
<dbReference type="OpenTargets" id="ENSG00000101955"/>
<dbReference type="PharmGKB" id="PA36133"/>
<dbReference type="VEuPathDB" id="HostDB:ENSG00000101955"/>
<dbReference type="eggNOG" id="ENOG502QVU2">
    <property type="taxonomic scope" value="Eukaryota"/>
</dbReference>
<dbReference type="GeneTree" id="ENSGT00940000160302"/>
<dbReference type="HOGENOM" id="CLU_047011_0_0_1"/>
<dbReference type="InParanoid" id="P78539"/>
<dbReference type="OMA" id="RIQYTVY"/>
<dbReference type="OrthoDB" id="6136178at2759"/>
<dbReference type="PAN-GO" id="P78539">
    <property type="GO annotations" value="1 GO annotation based on evolutionary models"/>
</dbReference>
<dbReference type="PhylomeDB" id="P78539"/>
<dbReference type="TreeFam" id="TF336515"/>
<dbReference type="PathwayCommons" id="P78539"/>
<dbReference type="SignaLink" id="P78539"/>
<dbReference type="SIGNOR" id="P78539"/>
<dbReference type="BioGRID-ORCS" id="8406">
    <property type="hits" value="13 hits in 774 CRISPR screens"/>
</dbReference>
<dbReference type="ChiTaRS" id="SRPX">
    <property type="organism name" value="human"/>
</dbReference>
<dbReference type="GeneWiki" id="SRPX"/>
<dbReference type="GenomeRNAi" id="8406"/>
<dbReference type="Pharos" id="P78539">
    <property type="development level" value="Tbio"/>
</dbReference>
<dbReference type="PRO" id="PR:P78539"/>
<dbReference type="Proteomes" id="UP000005640">
    <property type="component" value="Chromosome X"/>
</dbReference>
<dbReference type="RNAct" id="P78539">
    <property type="molecule type" value="protein"/>
</dbReference>
<dbReference type="Bgee" id="ENSG00000101955">
    <property type="expression patterns" value="Expressed in pericardium and 200 other cell types or tissues"/>
</dbReference>
<dbReference type="GO" id="GO:0005776">
    <property type="term" value="C:autophagosome"/>
    <property type="evidence" value="ECO:0007669"/>
    <property type="project" value="Ensembl"/>
</dbReference>
<dbReference type="GO" id="GO:0009986">
    <property type="term" value="C:cell surface"/>
    <property type="evidence" value="ECO:0007669"/>
    <property type="project" value="UniProtKB-SubCell"/>
</dbReference>
<dbReference type="GO" id="GO:0062023">
    <property type="term" value="C:collagen-containing extracellular matrix"/>
    <property type="evidence" value="ECO:0007005"/>
    <property type="project" value="BHF-UCL"/>
</dbReference>
<dbReference type="GO" id="GO:0005783">
    <property type="term" value="C:endoplasmic reticulum"/>
    <property type="evidence" value="ECO:0007669"/>
    <property type="project" value="Ensembl"/>
</dbReference>
<dbReference type="GO" id="GO:0016020">
    <property type="term" value="C:membrane"/>
    <property type="evidence" value="ECO:0000304"/>
    <property type="project" value="ProtInc"/>
</dbReference>
<dbReference type="GO" id="GO:0006914">
    <property type="term" value="P:autophagy"/>
    <property type="evidence" value="ECO:0007669"/>
    <property type="project" value="Ensembl"/>
</dbReference>
<dbReference type="GO" id="GO:0007155">
    <property type="term" value="P:cell adhesion"/>
    <property type="evidence" value="ECO:0007669"/>
    <property type="project" value="UniProtKB-KW"/>
</dbReference>
<dbReference type="GO" id="GO:0060244">
    <property type="term" value="P:negative regulation of cell proliferation involved in contact inhibition"/>
    <property type="evidence" value="ECO:0007669"/>
    <property type="project" value="Ensembl"/>
</dbReference>
<dbReference type="GO" id="GO:0001845">
    <property type="term" value="P:phagolysosome assembly"/>
    <property type="evidence" value="ECO:0000318"/>
    <property type="project" value="GO_Central"/>
</dbReference>
<dbReference type="GO" id="GO:2001241">
    <property type="term" value="P:positive regulation of extrinsic apoptotic signaling pathway in absence of ligand"/>
    <property type="evidence" value="ECO:0007669"/>
    <property type="project" value="Ensembl"/>
</dbReference>
<dbReference type="GO" id="GO:0034976">
    <property type="term" value="P:response to endoplasmic reticulum stress"/>
    <property type="evidence" value="ECO:0007669"/>
    <property type="project" value="Ensembl"/>
</dbReference>
<dbReference type="CDD" id="cd00033">
    <property type="entry name" value="CCP"/>
    <property type="match status" value="3"/>
</dbReference>
<dbReference type="FunFam" id="2.10.70.10:FF:000024">
    <property type="entry name" value="Sushi repeat-containing protein SRPX"/>
    <property type="match status" value="1"/>
</dbReference>
<dbReference type="FunFam" id="2.10.70.10:FF:000032">
    <property type="entry name" value="sushi repeat-containing protein SRPX isoform X1"/>
    <property type="match status" value="1"/>
</dbReference>
<dbReference type="Gene3D" id="2.10.70.10">
    <property type="entry name" value="Complement Module, domain 1"/>
    <property type="match status" value="3"/>
</dbReference>
<dbReference type="InterPro" id="IPR025232">
    <property type="entry name" value="DUF4174"/>
</dbReference>
<dbReference type="InterPro" id="IPR003410">
    <property type="entry name" value="HYR_dom"/>
</dbReference>
<dbReference type="InterPro" id="IPR043555">
    <property type="entry name" value="SRPX-like"/>
</dbReference>
<dbReference type="InterPro" id="IPR035976">
    <property type="entry name" value="Sushi/SCR/CCP_sf"/>
</dbReference>
<dbReference type="InterPro" id="IPR000436">
    <property type="entry name" value="Sushi_SCR_CCP_dom"/>
</dbReference>
<dbReference type="PANTHER" id="PTHR46343">
    <property type="entry name" value="HYR DOMAIN-CONTAINING PROTEIN"/>
    <property type="match status" value="1"/>
</dbReference>
<dbReference type="PANTHER" id="PTHR46343:SF1">
    <property type="entry name" value="SUSHI REPEAT-CONTAINING PROTEIN SRPX"/>
    <property type="match status" value="1"/>
</dbReference>
<dbReference type="Pfam" id="PF13778">
    <property type="entry name" value="DUF4174"/>
    <property type="match status" value="1"/>
</dbReference>
<dbReference type="Pfam" id="PF02494">
    <property type="entry name" value="HYR"/>
    <property type="match status" value="1"/>
</dbReference>
<dbReference type="Pfam" id="PF00084">
    <property type="entry name" value="Sushi"/>
    <property type="match status" value="3"/>
</dbReference>
<dbReference type="SMART" id="SM00032">
    <property type="entry name" value="CCP"/>
    <property type="match status" value="3"/>
</dbReference>
<dbReference type="SUPFAM" id="SSF57535">
    <property type="entry name" value="Complement control module/SCR domain"/>
    <property type="match status" value="3"/>
</dbReference>
<dbReference type="PROSITE" id="PS50825">
    <property type="entry name" value="HYR"/>
    <property type="match status" value="1"/>
</dbReference>
<dbReference type="PROSITE" id="PS50923">
    <property type="entry name" value="SUSHI"/>
    <property type="match status" value="3"/>
</dbReference>
<name>SRPX_HUMAN</name>
<sequence length="464" mass="51572">MGSPAHRPALLLLLPPLLLLLLLRVPPSRSFPGSGDSPLEDDEVGYSHPRYKDTPWCSPIKVKYGDVYCRAPQGGYYKTALGTRCDIRCQKGYELHGSSLLICQSNKRWSDKVICKQKRCPTLAMPANGGFKCVDGAYFNSRCEYYCSPGYTLKGERTVTCMDNKAWSGRPASCVDMEPPRIKCPSVKERIAEPNKLTVRVSWETPEGRDTADGILTDVILKGLPPGSNFPEGDHKIQYTVYDRAENKGTCKFRVKVRVKRCGKLNAPENGYMKCSSDGDNYGATCEFSCIGGYELQGSPARVCQSNLAWSGTEPTCAAMNVNVGVRTAAALLDQFYEKRRLLIVSTPTARNLLYRLQLGMLQQAQCGLDLRHITVVELVGVFPTLIGRIGAKIMPPALALQLRLLLRIPLYSFSMVLVDKHGMDKERYVSLVMPVALFNLIDTFPLRKEEMVLQAEMSQTCNT</sequence>
<proteinExistence type="evidence at protein level"/>
<comment type="function">
    <text>May be involved in phagocytosis during disk shedding, cell adhesion to cells other than the pigment epithelium or signal transduction.</text>
</comment>
<comment type="interaction">
    <interactant intactId="EBI-2371213">
        <id>P78539</id>
    </interactant>
    <interactant intactId="EBI-1043580">
        <id>Q9BRX2</id>
        <label>PELO</label>
    </interactant>
    <organismsDiffer>false</organismsDiffer>
    <experiments>6</experiments>
</comment>
<comment type="subcellular location">
    <subcellularLocation>
        <location evidence="10">Cell surface</location>
    </subcellularLocation>
    <text>Possibly surface of photoreceptor cell.</text>
</comment>
<comment type="alternative products">
    <event type="alternative splicing"/>
    <isoform>
        <id>P78539-1</id>
        <name>1</name>
        <sequence type="displayed"/>
    </isoform>
    <isoform>
        <id>P78539-2</id>
        <name>2</name>
        <sequence type="described" ref="VSP_004430"/>
    </isoform>
    <isoform>
        <id>P78539-3</id>
        <name>3</name>
        <sequence type="described" ref="VSP_043056"/>
    </isoform>
    <isoform>
        <id>P78539-4</id>
        <name>4</name>
        <sequence type="described" ref="VSP_045468"/>
    </isoform>
    <isoform>
        <id>P78539-5</id>
        <name>5</name>
        <sequence type="described" ref="VSP_046757"/>
    </isoform>
    <text>Additional isoforms seem to exist.</text>
</comment>
<comment type="tissue specificity">
    <text evidence="6">Detected in fibroblasts (at protein level) (PubMed:36213313). Retina and heart; less in placenta, pancreas, lung, liver, skeletal muscle, kidney and brain.</text>
</comment>
<feature type="signal peptide" evidence="1">
    <location>
        <begin position="1"/>
        <end position="30"/>
    </location>
</feature>
<feature type="chain" id="PRO_0000022416" description="Sushi repeat-containing protein SRPX">
    <location>
        <begin position="31"/>
        <end position="464"/>
    </location>
</feature>
<feature type="domain" description="Sushi 1" evidence="3">
    <location>
        <begin position="57"/>
        <end position="117"/>
    </location>
</feature>
<feature type="domain" description="Sushi 2" evidence="3">
    <location>
        <begin position="118"/>
        <end position="176"/>
    </location>
</feature>
<feature type="domain" description="HYR" evidence="2">
    <location>
        <begin position="177"/>
        <end position="259"/>
    </location>
</feature>
<feature type="domain" description="Sushi 3" evidence="3">
    <location>
        <begin position="260"/>
        <end position="319"/>
    </location>
</feature>
<feature type="glycosylation site" description="O-linked (Xyl...) (chondroitin sulfate) serine" evidence="5 6">
    <location>
        <position position="34"/>
    </location>
</feature>
<feature type="disulfide bond" evidence="3">
    <location>
        <begin position="57"/>
        <end position="85"/>
    </location>
</feature>
<feature type="disulfide bond" evidence="3">
    <location>
        <begin position="69"/>
        <end position="103"/>
    </location>
</feature>
<feature type="disulfide bond" evidence="3">
    <location>
        <begin position="89"/>
        <end position="115"/>
    </location>
</feature>
<feature type="disulfide bond" evidence="3">
    <location>
        <begin position="120"/>
        <end position="161"/>
    </location>
</feature>
<feature type="disulfide bond" evidence="3">
    <location>
        <begin position="147"/>
        <end position="174"/>
    </location>
</feature>
<feature type="disulfide bond" evidence="3">
    <location>
        <begin position="262"/>
        <end position="304"/>
    </location>
</feature>
<feature type="disulfide bond" evidence="3">
    <location>
        <begin position="290"/>
        <end position="317"/>
    </location>
</feature>
<feature type="splice variant" id="VSP_004430" description="In isoform 2." evidence="10">
    <original>MGSPAHRPALLLLLPPLLLLLLLRVPPSRSFPGSGDSPLEDDEVGYSHPRYK</original>
    <variation>MDFDVGRTTHLSSSPCSASNGGESGQVSKRRCLIGESGH</variation>
    <location>
        <begin position="1"/>
        <end position="52"/>
    </location>
</feature>
<feature type="splice variant" id="VSP_046757" description="In isoform 5." evidence="9">
    <location>
        <begin position="33"/>
        <end position="52"/>
    </location>
</feature>
<feature type="splice variant" id="VSP_043056" description="In isoform 3." evidence="9">
    <original>QKRCPTLAMPANGGFKCVDGAYFNSRCEYYCSPGYTLKGERTVTCMDNKAWSGRPASCVD</original>
    <variation>H</variation>
    <location>
        <begin position="117"/>
        <end position="176"/>
    </location>
</feature>
<feature type="splice variant" id="VSP_045468" description="In isoform 4." evidence="9">
    <original>QAQCGLDLRHITVVELVGVFPTLIGRIGAKIMPPALALQLRLLLRIPLYSFSMVLVDKHGMDKERYVSLVMPVALFNLIDTFPLRKEEMVLQAEMSQTCNT</original>
    <variation>AVAANPTLLLQYGASG</variation>
    <location>
        <begin position="364"/>
        <end position="464"/>
    </location>
</feature>
<feature type="sequence variant" id="VAR_005624" evidence="4 7 8">
    <location>
        <position position="23"/>
    </location>
</feature>
<feature type="sequence variant" id="VAR_005625" description="In dbSNP:rs1123773." evidence="7">
    <original>P</original>
    <variation>S</variation>
    <location>
        <position position="225"/>
    </location>
</feature>
<feature type="sequence variant" id="VAR_005626" description="In dbSNP:rs35318931." evidence="7">
    <original>S</original>
    <variation>F</variation>
    <location>
        <position position="413"/>
    </location>
</feature>
<feature type="sequence conflict" description="In Ref. 3; AAB40715." evidence="10" ref="3">
    <original>RPASCVDME</original>
    <variation>ASLLCGYG</variation>
    <location>
        <begin position="170"/>
        <end position="178"/>
    </location>
</feature>
<feature type="sequence conflict" description="In Ref. 3; AAB40715." evidence="10" ref="3">
    <location>
        <position position="202"/>
    </location>
</feature>
<feature type="sequence conflict" description="In Ref. 4; BAG54210." evidence="10" ref="4">
    <original>Y</original>
    <variation>H</variation>
    <location>
        <position position="242"/>
    </location>
</feature>
<feature type="sequence conflict" description="In Ref. 4; BAF82119." evidence="10" ref="4">
    <original>G</original>
    <variation>S</variation>
    <location>
        <position position="292"/>
    </location>
</feature>
<protein>
    <recommendedName>
        <fullName>Sushi repeat-containing protein SRPX</fullName>
    </recommendedName>
</protein>
<gene>
    <name type="primary">SRPX</name>
    <name type="synonym">ETX1</name>
</gene>